<organism>
    <name type="scientific">Arabidopsis thaliana</name>
    <name type="common">Mouse-ear cress</name>
    <dbReference type="NCBI Taxonomy" id="3702"/>
    <lineage>
        <taxon>Eukaryota</taxon>
        <taxon>Viridiplantae</taxon>
        <taxon>Streptophyta</taxon>
        <taxon>Embryophyta</taxon>
        <taxon>Tracheophyta</taxon>
        <taxon>Spermatophyta</taxon>
        <taxon>Magnoliopsida</taxon>
        <taxon>eudicotyledons</taxon>
        <taxon>Gunneridae</taxon>
        <taxon>Pentapetalae</taxon>
        <taxon>rosids</taxon>
        <taxon>malvids</taxon>
        <taxon>Brassicales</taxon>
        <taxon>Brassicaceae</taxon>
        <taxon>Camelineae</taxon>
        <taxon>Arabidopsis</taxon>
    </lineage>
</organism>
<comment type="subcellular location">
    <subcellularLocation>
        <location evidence="5">Cell membrane</location>
        <topology evidence="5">Single-pass type I membrane protein</topology>
    </subcellularLocation>
</comment>
<comment type="similarity">
    <text evidence="5">Belongs to the RLP family.</text>
</comment>
<comment type="sequence caution" evidence="5">
    <conflict type="erroneous gene model prediction">
        <sequence resource="EMBL-CDS" id="AAF16758"/>
    </conflict>
</comment>
<accession>F4HWL3</accession>
<accession>Q9SGN1</accession>
<keyword id="KW-1003">Cell membrane</keyword>
<keyword id="KW-0325">Glycoprotein</keyword>
<keyword id="KW-0433">Leucine-rich repeat</keyword>
<keyword id="KW-0472">Membrane</keyword>
<keyword id="KW-0675">Receptor</keyword>
<keyword id="KW-1185">Reference proteome</keyword>
<keyword id="KW-0677">Repeat</keyword>
<keyword id="KW-0732">Signal</keyword>
<keyword id="KW-0812">Transmembrane</keyword>
<keyword id="KW-1133">Transmembrane helix</keyword>
<proteinExistence type="evidence at transcript level"/>
<dbReference type="EMBL" id="AC010155">
    <property type="protein sequence ID" value="AAF16758.1"/>
    <property type="status" value="ALT_SEQ"/>
    <property type="molecule type" value="Genomic_DNA"/>
</dbReference>
<dbReference type="EMBL" id="CP002684">
    <property type="protein sequence ID" value="AEE30960.1"/>
    <property type="molecule type" value="Genomic_DNA"/>
</dbReference>
<dbReference type="EMBL" id="BX816806">
    <property type="status" value="NOT_ANNOTATED_CDS"/>
    <property type="molecule type" value="mRNA"/>
</dbReference>
<dbReference type="RefSeq" id="NP_174156.1">
    <property type="nucleotide sequence ID" value="NM_102600.2"/>
</dbReference>
<dbReference type="SMR" id="F4HWL3"/>
<dbReference type="FunCoup" id="F4HWL3">
    <property type="interactions" value="2187"/>
</dbReference>
<dbReference type="STRING" id="3702.F4HWL3"/>
<dbReference type="GlyCosmos" id="F4HWL3">
    <property type="glycosylation" value="7 sites, No reported glycans"/>
</dbReference>
<dbReference type="GlyGen" id="F4HWL3">
    <property type="glycosylation" value="8 sites"/>
</dbReference>
<dbReference type="iPTMnet" id="F4HWL3"/>
<dbReference type="PaxDb" id="3702-AT1G28340.1"/>
<dbReference type="ProteomicsDB" id="228009"/>
<dbReference type="EnsemblPlants" id="AT1G28340.1">
    <property type="protein sequence ID" value="AT1G28340.1"/>
    <property type="gene ID" value="AT1G28340"/>
</dbReference>
<dbReference type="GeneID" id="839730"/>
<dbReference type="Gramene" id="AT1G28340.1">
    <property type="protein sequence ID" value="AT1G28340.1"/>
    <property type="gene ID" value="AT1G28340"/>
</dbReference>
<dbReference type="KEGG" id="ath:AT1G28340"/>
<dbReference type="Araport" id="AT1G28340"/>
<dbReference type="TAIR" id="AT1G28340">
    <property type="gene designation" value="RLP4"/>
</dbReference>
<dbReference type="eggNOG" id="KOG0619">
    <property type="taxonomic scope" value="Eukaryota"/>
</dbReference>
<dbReference type="HOGENOM" id="CLU_000288_41_5_1"/>
<dbReference type="InParanoid" id="F4HWL3"/>
<dbReference type="OMA" id="NHDDEQA"/>
<dbReference type="PRO" id="PR:F4HWL3"/>
<dbReference type="Proteomes" id="UP000006548">
    <property type="component" value="Chromosome 1"/>
</dbReference>
<dbReference type="ExpressionAtlas" id="F4HWL3">
    <property type="expression patterns" value="baseline and differential"/>
</dbReference>
<dbReference type="GO" id="GO:0005768">
    <property type="term" value="C:endosome"/>
    <property type="evidence" value="ECO:0007005"/>
    <property type="project" value="TAIR"/>
</dbReference>
<dbReference type="GO" id="GO:0005794">
    <property type="term" value="C:Golgi apparatus"/>
    <property type="evidence" value="ECO:0007005"/>
    <property type="project" value="TAIR"/>
</dbReference>
<dbReference type="GO" id="GO:0005886">
    <property type="term" value="C:plasma membrane"/>
    <property type="evidence" value="ECO:0007669"/>
    <property type="project" value="UniProtKB-SubCell"/>
</dbReference>
<dbReference type="GO" id="GO:0005802">
    <property type="term" value="C:trans-Golgi network"/>
    <property type="evidence" value="ECO:0007005"/>
    <property type="project" value="TAIR"/>
</dbReference>
<dbReference type="FunFam" id="2.60.120.430:FF:000008">
    <property type="entry name" value="Putative LRR receptor-like serine/threonine-protein kinase"/>
    <property type="match status" value="1"/>
</dbReference>
<dbReference type="FunFam" id="3.80.10.10:FF:000135">
    <property type="entry name" value="Putative LRR receptor-like serine/threonine-protein kinase"/>
    <property type="match status" value="1"/>
</dbReference>
<dbReference type="Gene3D" id="2.60.120.430">
    <property type="entry name" value="Galactose-binding lectin"/>
    <property type="match status" value="1"/>
</dbReference>
<dbReference type="Gene3D" id="3.80.10.10">
    <property type="entry name" value="Ribonuclease Inhibitor"/>
    <property type="match status" value="1"/>
</dbReference>
<dbReference type="InterPro" id="IPR001611">
    <property type="entry name" value="Leu-rich_rpt"/>
</dbReference>
<dbReference type="InterPro" id="IPR032675">
    <property type="entry name" value="LRR_dom_sf"/>
</dbReference>
<dbReference type="InterPro" id="IPR024788">
    <property type="entry name" value="Malectin-like_Carb-bd_dom"/>
</dbReference>
<dbReference type="PANTHER" id="PTHR45631">
    <property type="entry name" value="OS07G0107800 PROTEIN-RELATED"/>
    <property type="match status" value="1"/>
</dbReference>
<dbReference type="PANTHER" id="PTHR45631:SF181">
    <property type="entry name" value="RECEPTOR-LIKE PROTEIN 4"/>
    <property type="match status" value="1"/>
</dbReference>
<dbReference type="Pfam" id="PF13855">
    <property type="entry name" value="LRR_8"/>
    <property type="match status" value="1"/>
</dbReference>
<dbReference type="Pfam" id="PF12819">
    <property type="entry name" value="Malectin_like"/>
    <property type="match status" value="1"/>
</dbReference>
<dbReference type="SUPFAM" id="SSF52058">
    <property type="entry name" value="L domain-like"/>
    <property type="match status" value="1"/>
</dbReference>
<evidence type="ECO:0000255" key="1"/>
<evidence type="ECO:0000255" key="2">
    <source>
        <dbReference type="PROSITE-ProRule" id="PRU00498"/>
    </source>
</evidence>
<evidence type="ECO:0000256" key="3">
    <source>
        <dbReference type="SAM" id="MobiDB-lite"/>
    </source>
</evidence>
<evidence type="ECO:0000303" key="4">
    <source>
    </source>
</evidence>
<evidence type="ECO:0000305" key="5"/>
<evidence type="ECO:0000312" key="6">
    <source>
        <dbReference type="Araport" id="AT1G28340"/>
    </source>
</evidence>
<evidence type="ECO:0000312" key="7">
    <source>
        <dbReference type="EMBL" id="AAF16758.1"/>
    </source>
</evidence>
<name>RLP4_ARATH</name>
<gene>
    <name evidence="4" type="primary">RLP4</name>
    <name evidence="6" type="ordered locus">At1g28340</name>
    <name evidence="7" type="ORF">F3M18.23</name>
</gene>
<sequence>MMLRFILASLLLSSFSLYSSLARPAPYALRISCGARKNVRTPPTYALWFKDIAYTGGVPANATTPTYITPPLKTLRYFPISEGPNNCYNIVRVPKGHYSVRIFFGLVDQPSFDKEPLFDISIEGTQISSLKSGWSSQDDQVFAEALIFLLGGTATICFHSTGHGDPAILSIEILQVDDKAYSFGEGWGQGVILRTATRLTCGTGKSRFDEDYRGDHWGGDRFWNRMRSFGKSADSPRSTEETIKKASVSPNFYPEGLYQSALVSTDDQPDLTYSLDVEPNRNYSVWLHFAEIDNTITAEGKRVFDVVINGDTFFEDVDIIKMSGGRYAALVLNATVTVSGRTLTVVLQPKAGGHAIINAIEVFEIITAEFKTLRDEVSALQKMKKALGLPSRFGWNGDPCVPPQHPWSGANCQLDKNTSRWFIDGLDLDNQGLKGFLPNDISKLKHLQSINLSENNIRGGIPASLGSVTSLEVLDLSYNSFNGSIPETLGELTSLRILNLNGNSLSGKVPAAVGGRLLHRASFNFTDNAGLCGIPGLPACGPHLSSGAKIGIAFGVSLAFLLIVACAMIWWKRRQNILRAQQIAARGAPYAKKRTHVSHDIQMSRHGHNNHGQARTAVENGPSLLS</sequence>
<protein>
    <recommendedName>
        <fullName evidence="4">Receptor-like protein 4</fullName>
        <shortName evidence="4">AtRLP4</shortName>
    </recommendedName>
</protein>
<feature type="signal peptide" evidence="1">
    <location>
        <begin position="1"/>
        <end position="22"/>
    </location>
</feature>
<feature type="chain" id="PRO_5003316177" description="Receptor-like protein 4">
    <location>
        <begin position="23"/>
        <end position="626"/>
    </location>
</feature>
<feature type="topological domain" description="Extracellular" evidence="1">
    <location>
        <begin position="23"/>
        <end position="549"/>
    </location>
</feature>
<feature type="transmembrane region" description="Helical" evidence="1">
    <location>
        <begin position="550"/>
        <end position="570"/>
    </location>
</feature>
<feature type="topological domain" description="Cytoplasmic" evidence="1">
    <location>
        <begin position="571"/>
        <end position="626"/>
    </location>
</feature>
<feature type="repeat" description="LRR 1" evidence="1">
    <location>
        <begin position="420"/>
        <end position="444"/>
    </location>
</feature>
<feature type="repeat" description="LRR 2" evidence="1">
    <location>
        <begin position="445"/>
        <end position="468"/>
    </location>
</feature>
<feature type="repeat" description="LRR 3" evidence="1">
    <location>
        <begin position="470"/>
        <end position="492"/>
    </location>
</feature>
<feature type="repeat" description="LRR 4" evidence="1">
    <location>
        <begin position="493"/>
        <end position="516"/>
    </location>
</feature>
<feature type="region of interest" description="Disordered" evidence="3">
    <location>
        <begin position="603"/>
        <end position="626"/>
    </location>
</feature>
<feature type="glycosylation site" description="N-linked (GlcNAc...) asparagine" evidence="2">
    <location>
        <position position="61"/>
    </location>
</feature>
<feature type="glycosylation site" description="N-linked (GlcNAc...) asparagine" evidence="2">
    <location>
        <position position="282"/>
    </location>
</feature>
<feature type="glycosylation site" description="N-linked (GlcNAc...) asparagine" evidence="2">
    <location>
        <position position="333"/>
    </location>
</feature>
<feature type="glycosylation site" description="N-linked (GlcNAc...) asparagine" evidence="2">
    <location>
        <position position="417"/>
    </location>
</feature>
<feature type="glycosylation site" description="N-linked (GlcNAc...) asparagine" evidence="2">
    <location>
        <position position="451"/>
    </location>
</feature>
<feature type="glycosylation site" description="N-linked (GlcNAc...) asparagine" evidence="2">
    <location>
        <position position="482"/>
    </location>
</feature>
<feature type="glycosylation site" description="N-linked (GlcNAc...) asparagine" evidence="2">
    <location>
        <position position="524"/>
    </location>
</feature>
<reference key="1">
    <citation type="journal article" date="2000" name="Nature">
        <title>Sequence and analysis of chromosome 1 of the plant Arabidopsis thaliana.</title>
        <authorList>
            <person name="Theologis A."/>
            <person name="Ecker J.R."/>
            <person name="Palm C.J."/>
            <person name="Federspiel N.A."/>
            <person name="Kaul S."/>
            <person name="White O."/>
            <person name="Alonso J."/>
            <person name="Altafi H."/>
            <person name="Araujo R."/>
            <person name="Bowman C.L."/>
            <person name="Brooks S.Y."/>
            <person name="Buehler E."/>
            <person name="Chan A."/>
            <person name="Chao Q."/>
            <person name="Chen H."/>
            <person name="Cheuk R.F."/>
            <person name="Chin C.W."/>
            <person name="Chung M.K."/>
            <person name="Conn L."/>
            <person name="Conway A.B."/>
            <person name="Conway A.R."/>
            <person name="Creasy T.H."/>
            <person name="Dewar K."/>
            <person name="Dunn P."/>
            <person name="Etgu P."/>
            <person name="Feldblyum T.V."/>
            <person name="Feng J.-D."/>
            <person name="Fong B."/>
            <person name="Fujii C.Y."/>
            <person name="Gill J.E."/>
            <person name="Goldsmith A.D."/>
            <person name="Haas B."/>
            <person name="Hansen N.F."/>
            <person name="Hughes B."/>
            <person name="Huizar L."/>
            <person name="Hunter J.L."/>
            <person name="Jenkins J."/>
            <person name="Johnson-Hopson C."/>
            <person name="Khan S."/>
            <person name="Khaykin E."/>
            <person name="Kim C.J."/>
            <person name="Koo H.L."/>
            <person name="Kremenetskaia I."/>
            <person name="Kurtz D.B."/>
            <person name="Kwan A."/>
            <person name="Lam B."/>
            <person name="Langin-Hooper S."/>
            <person name="Lee A."/>
            <person name="Lee J.M."/>
            <person name="Lenz C.A."/>
            <person name="Li J.H."/>
            <person name="Li Y.-P."/>
            <person name="Lin X."/>
            <person name="Liu S.X."/>
            <person name="Liu Z.A."/>
            <person name="Luros J.S."/>
            <person name="Maiti R."/>
            <person name="Marziali A."/>
            <person name="Militscher J."/>
            <person name="Miranda M."/>
            <person name="Nguyen M."/>
            <person name="Nierman W.C."/>
            <person name="Osborne B.I."/>
            <person name="Pai G."/>
            <person name="Peterson J."/>
            <person name="Pham P.K."/>
            <person name="Rizzo M."/>
            <person name="Rooney T."/>
            <person name="Rowley D."/>
            <person name="Sakano H."/>
            <person name="Salzberg S.L."/>
            <person name="Schwartz J.R."/>
            <person name="Shinn P."/>
            <person name="Southwick A.M."/>
            <person name="Sun H."/>
            <person name="Tallon L.J."/>
            <person name="Tambunga G."/>
            <person name="Toriumi M.J."/>
            <person name="Town C.D."/>
            <person name="Utterback T."/>
            <person name="Van Aken S."/>
            <person name="Vaysberg M."/>
            <person name="Vysotskaia V.S."/>
            <person name="Walker M."/>
            <person name="Wu D."/>
            <person name="Yu G."/>
            <person name="Fraser C.M."/>
            <person name="Venter J.C."/>
            <person name="Davis R.W."/>
        </authorList>
    </citation>
    <scope>NUCLEOTIDE SEQUENCE [LARGE SCALE GENOMIC DNA]</scope>
    <source>
        <strain>cv. Columbia</strain>
    </source>
</reference>
<reference key="2">
    <citation type="journal article" date="2017" name="Plant J.">
        <title>Araport11: a complete reannotation of the Arabidopsis thaliana reference genome.</title>
        <authorList>
            <person name="Cheng C.Y."/>
            <person name="Krishnakumar V."/>
            <person name="Chan A.P."/>
            <person name="Thibaud-Nissen F."/>
            <person name="Schobel S."/>
            <person name="Town C.D."/>
        </authorList>
    </citation>
    <scope>GENOME REANNOTATION</scope>
    <source>
        <strain>cv. Columbia</strain>
    </source>
</reference>
<reference key="3">
    <citation type="journal article" date="2004" name="Genome Res.">
        <title>Whole genome sequence comparisons and 'full-length' cDNA sequences: a combined approach to evaluate and improve Arabidopsis genome annotation.</title>
        <authorList>
            <person name="Castelli V."/>
            <person name="Aury J.-M."/>
            <person name="Jaillon O."/>
            <person name="Wincker P."/>
            <person name="Clepet C."/>
            <person name="Menard M."/>
            <person name="Cruaud C."/>
            <person name="Quetier F."/>
            <person name="Scarpelli C."/>
            <person name="Schaechter V."/>
            <person name="Temple G."/>
            <person name="Caboche M."/>
            <person name="Weissenbach J."/>
            <person name="Salanoubat M."/>
        </authorList>
    </citation>
    <scope>NUCLEOTIDE SEQUENCE [LARGE SCALE MRNA] OF 487-626</scope>
    <source>
        <strain>cv. Columbia</strain>
    </source>
</reference>
<reference key="4">
    <citation type="journal article" date="2005" name="Plant Physiol.">
        <title>Phylogenomic analysis of the receptor-like proteins of rice and Arabidopsis.</title>
        <authorList>
            <person name="Fritz-Laylin L.K."/>
            <person name="Krishnamurthy N."/>
            <person name="Toer M."/>
            <person name="Sjoelander K.V."/>
            <person name="Jones J.D."/>
        </authorList>
    </citation>
    <scope>GENE FAMILY</scope>
</reference>
<reference key="5">
    <citation type="journal article" date="2008" name="Plant Physiol.">
        <title>A genome-wide functional investigation into the roles of receptor-like proteins in Arabidopsis.</title>
        <authorList>
            <person name="Wang G."/>
            <person name="Ellendorff U."/>
            <person name="Kemp B."/>
            <person name="Mansfield J.W."/>
            <person name="Forsyth A."/>
            <person name="Mitchell K."/>
            <person name="Bastas K."/>
            <person name="Liu C.-M."/>
            <person name="Woods-Toer A."/>
            <person name="Zipfel C."/>
            <person name="de Wit P.J.G.M."/>
            <person name="Jones J.D.G."/>
            <person name="Toer M."/>
            <person name="Thomma B.P.H.J."/>
        </authorList>
    </citation>
    <scope>GENE FAMILY</scope>
    <scope>NOMENCLATURE</scope>
</reference>